<protein>
    <recommendedName>
        <fullName evidence="1">4-hydroxy-tetrahydrodipicolinate reductase</fullName>
        <shortName evidence="1">HTPA reductase</shortName>
        <ecNumber evidence="1">1.17.1.8</ecNumber>
    </recommendedName>
</protein>
<keyword id="KW-0028">Amino-acid biosynthesis</keyword>
<keyword id="KW-0963">Cytoplasm</keyword>
<keyword id="KW-0220">Diaminopimelate biosynthesis</keyword>
<keyword id="KW-0457">Lysine biosynthesis</keyword>
<keyword id="KW-0520">NAD</keyword>
<keyword id="KW-0521">NADP</keyword>
<keyword id="KW-0560">Oxidoreductase</keyword>
<accession>Q9PEC3</accession>
<organism>
    <name type="scientific">Xylella fastidiosa (strain 9a5c)</name>
    <dbReference type="NCBI Taxonomy" id="160492"/>
    <lineage>
        <taxon>Bacteria</taxon>
        <taxon>Pseudomonadati</taxon>
        <taxon>Pseudomonadota</taxon>
        <taxon>Gammaproteobacteria</taxon>
        <taxon>Lysobacterales</taxon>
        <taxon>Lysobacteraceae</taxon>
        <taxon>Xylella</taxon>
    </lineage>
</organism>
<comment type="function">
    <text evidence="1">Catalyzes the conversion of 4-hydroxy-tetrahydrodipicolinate (HTPA) to tetrahydrodipicolinate.</text>
</comment>
<comment type="catalytic activity">
    <reaction evidence="1">
        <text>(S)-2,3,4,5-tetrahydrodipicolinate + NAD(+) + H2O = (2S,4S)-4-hydroxy-2,3,4,5-tetrahydrodipicolinate + NADH + H(+)</text>
        <dbReference type="Rhea" id="RHEA:35323"/>
        <dbReference type="ChEBI" id="CHEBI:15377"/>
        <dbReference type="ChEBI" id="CHEBI:15378"/>
        <dbReference type="ChEBI" id="CHEBI:16845"/>
        <dbReference type="ChEBI" id="CHEBI:57540"/>
        <dbReference type="ChEBI" id="CHEBI:57945"/>
        <dbReference type="ChEBI" id="CHEBI:67139"/>
        <dbReference type="EC" id="1.17.1.8"/>
    </reaction>
</comment>
<comment type="catalytic activity">
    <reaction evidence="1">
        <text>(S)-2,3,4,5-tetrahydrodipicolinate + NADP(+) + H2O = (2S,4S)-4-hydroxy-2,3,4,5-tetrahydrodipicolinate + NADPH + H(+)</text>
        <dbReference type="Rhea" id="RHEA:35331"/>
        <dbReference type="ChEBI" id="CHEBI:15377"/>
        <dbReference type="ChEBI" id="CHEBI:15378"/>
        <dbReference type="ChEBI" id="CHEBI:16845"/>
        <dbReference type="ChEBI" id="CHEBI:57783"/>
        <dbReference type="ChEBI" id="CHEBI:58349"/>
        <dbReference type="ChEBI" id="CHEBI:67139"/>
        <dbReference type="EC" id="1.17.1.8"/>
    </reaction>
</comment>
<comment type="pathway">
    <text evidence="1">Amino-acid biosynthesis; L-lysine biosynthesis via DAP pathway; (S)-tetrahydrodipicolinate from L-aspartate: step 4/4.</text>
</comment>
<comment type="subcellular location">
    <subcellularLocation>
        <location evidence="1">Cytoplasm</location>
    </subcellularLocation>
</comment>
<comment type="similarity">
    <text evidence="1">Belongs to the DapB family.</text>
</comment>
<comment type="caution">
    <text evidence="2">Was originally thought to be a dihydrodipicolinate reductase (DHDPR), catalyzing the conversion of dihydrodipicolinate to tetrahydrodipicolinate. However, it was shown in E.coli that the substrate of the enzymatic reaction is not dihydrodipicolinate (DHDP) but in fact (2S,4S)-4-hydroxy-2,3,4,5-tetrahydrodipicolinic acid (HTPA), the product released by the DapA-catalyzed reaction.</text>
</comment>
<evidence type="ECO:0000255" key="1">
    <source>
        <dbReference type="HAMAP-Rule" id="MF_00102"/>
    </source>
</evidence>
<evidence type="ECO:0000305" key="2"/>
<name>DAPB_XYLFA</name>
<gene>
    <name evidence="1" type="primary">dapB</name>
    <name type="ordered locus">XF_1105</name>
</gene>
<feature type="chain" id="PRO_0000141512" description="4-hydroxy-tetrahydrodipicolinate reductase">
    <location>
        <begin position="1"/>
        <end position="237"/>
    </location>
</feature>
<feature type="active site" description="Proton donor/acceptor" evidence="1">
    <location>
        <position position="148"/>
    </location>
</feature>
<feature type="active site" description="Proton donor" evidence="1">
    <location>
        <position position="152"/>
    </location>
</feature>
<feature type="binding site" evidence="1">
    <location>
        <begin position="11"/>
        <end position="16"/>
    </location>
    <ligand>
        <name>NAD(+)</name>
        <dbReference type="ChEBI" id="CHEBI:57540"/>
    </ligand>
</feature>
<feature type="binding site" evidence="1">
    <location>
        <begin position="92"/>
        <end position="94"/>
    </location>
    <ligand>
        <name>NAD(+)</name>
        <dbReference type="ChEBI" id="CHEBI:57540"/>
    </ligand>
</feature>
<feature type="binding site" evidence="1">
    <location>
        <begin position="116"/>
        <end position="119"/>
    </location>
    <ligand>
        <name>NAD(+)</name>
        <dbReference type="ChEBI" id="CHEBI:57540"/>
    </ligand>
</feature>
<feature type="binding site" evidence="1">
    <location>
        <position position="149"/>
    </location>
    <ligand>
        <name>(S)-2,3,4,5-tetrahydrodipicolinate</name>
        <dbReference type="ChEBI" id="CHEBI:16845"/>
    </ligand>
</feature>
<feature type="binding site" evidence="1">
    <location>
        <begin position="158"/>
        <end position="159"/>
    </location>
    <ligand>
        <name>(S)-2,3,4,5-tetrahydrodipicolinate</name>
        <dbReference type="ChEBI" id="CHEBI:16845"/>
    </ligand>
</feature>
<reference key="1">
    <citation type="journal article" date="2000" name="Nature">
        <title>The genome sequence of the plant pathogen Xylella fastidiosa.</title>
        <authorList>
            <person name="Simpson A.J.G."/>
            <person name="Reinach F.C."/>
            <person name="Arruda P."/>
            <person name="Abreu F.A."/>
            <person name="Acencio M."/>
            <person name="Alvarenga R."/>
            <person name="Alves L.M.C."/>
            <person name="Araya J.E."/>
            <person name="Baia G.S."/>
            <person name="Baptista C.S."/>
            <person name="Barros M.H."/>
            <person name="Bonaccorsi E.D."/>
            <person name="Bordin S."/>
            <person name="Bove J.M."/>
            <person name="Briones M.R.S."/>
            <person name="Bueno M.R.P."/>
            <person name="Camargo A.A."/>
            <person name="Camargo L.E.A."/>
            <person name="Carraro D.M."/>
            <person name="Carrer H."/>
            <person name="Colauto N.B."/>
            <person name="Colombo C."/>
            <person name="Costa F.F."/>
            <person name="Costa M.C.R."/>
            <person name="Costa-Neto C.M."/>
            <person name="Coutinho L.L."/>
            <person name="Cristofani M."/>
            <person name="Dias-Neto E."/>
            <person name="Docena C."/>
            <person name="El-Dorry H."/>
            <person name="Facincani A.P."/>
            <person name="Ferreira A.J.S."/>
            <person name="Ferreira V.C.A."/>
            <person name="Ferro J.A."/>
            <person name="Fraga J.S."/>
            <person name="Franca S.C."/>
            <person name="Franco M.C."/>
            <person name="Frohme M."/>
            <person name="Furlan L.R."/>
            <person name="Garnier M."/>
            <person name="Goldman G.H."/>
            <person name="Goldman M.H.S."/>
            <person name="Gomes S.L."/>
            <person name="Gruber A."/>
            <person name="Ho P.L."/>
            <person name="Hoheisel J.D."/>
            <person name="Junqueira M.L."/>
            <person name="Kemper E.L."/>
            <person name="Kitajima J.P."/>
            <person name="Krieger J.E."/>
            <person name="Kuramae E.E."/>
            <person name="Laigret F."/>
            <person name="Lambais M.R."/>
            <person name="Leite L.C.C."/>
            <person name="Lemos E.G.M."/>
            <person name="Lemos M.V.F."/>
            <person name="Lopes S.A."/>
            <person name="Lopes C.R."/>
            <person name="Machado J.A."/>
            <person name="Machado M.A."/>
            <person name="Madeira A.M.B.N."/>
            <person name="Madeira H.M.F."/>
            <person name="Marino C.L."/>
            <person name="Marques M.V."/>
            <person name="Martins E.A.L."/>
            <person name="Martins E.M.F."/>
            <person name="Matsukuma A.Y."/>
            <person name="Menck C.F.M."/>
            <person name="Miracca E.C."/>
            <person name="Miyaki C.Y."/>
            <person name="Monteiro-Vitorello C.B."/>
            <person name="Moon D.H."/>
            <person name="Nagai M.A."/>
            <person name="Nascimento A.L.T.O."/>
            <person name="Netto L.E.S."/>
            <person name="Nhani A. Jr."/>
            <person name="Nobrega F.G."/>
            <person name="Nunes L.R."/>
            <person name="Oliveira M.A."/>
            <person name="de Oliveira M.C."/>
            <person name="de Oliveira R.C."/>
            <person name="Palmieri D.A."/>
            <person name="Paris A."/>
            <person name="Peixoto B.R."/>
            <person name="Pereira G.A.G."/>
            <person name="Pereira H.A. Jr."/>
            <person name="Pesquero J.B."/>
            <person name="Quaggio R.B."/>
            <person name="Roberto P.G."/>
            <person name="Rodrigues V."/>
            <person name="de Rosa A.J.M."/>
            <person name="de Rosa V.E. Jr."/>
            <person name="de Sa R.G."/>
            <person name="Santelli R.V."/>
            <person name="Sawasaki H.E."/>
            <person name="da Silva A.C.R."/>
            <person name="da Silva A.M."/>
            <person name="da Silva F.R."/>
            <person name="Silva W.A. Jr."/>
            <person name="da Silveira J.F."/>
            <person name="Silvestri M.L.Z."/>
            <person name="Siqueira W.J."/>
            <person name="de Souza A.A."/>
            <person name="de Souza A.P."/>
            <person name="Terenzi M.F."/>
            <person name="Truffi D."/>
            <person name="Tsai S.M."/>
            <person name="Tsuhako M.H."/>
            <person name="Vallada H."/>
            <person name="Van Sluys M.A."/>
            <person name="Verjovski-Almeida S."/>
            <person name="Vettore A.L."/>
            <person name="Zago M.A."/>
            <person name="Zatz M."/>
            <person name="Meidanis J."/>
            <person name="Setubal J.C."/>
        </authorList>
    </citation>
    <scope>NUCLEOTIDE SEQUENCE [LARGE SCALE GENOMIC DNA]</scope>
    <source>
        <strain>9a5c</strain>
    </source>
</reference>
<sequence>MDSFLRLLIHGASGRMGQALLRLASEDPSFQVAAAVVGQAPDRHVSDGVPFFAAAELAAVPAFDVAIDFSLPQGFSSLLALCVARAVPLVSGTTGLDSRQHEALVMAGAQIPLVWGSNFSVGMAVLVNLVERAGDALSGWDCDIVESHHVHKQDAPSGSALTLGEAVACKGIAPRYTSLRAGDIVGDHLVQFTGLGERIELVHRATNRDVFARGALYVARRVVGRVPGCYRVRDLIM</sequence>
<dbReference type="EC" id="1.17.1.8" evidence="1"/>
<dbReference type="EMBL" id="AE003849">
    <property type="protein sequence ID" value="AAF83915.1"/>
    <property type="molecule type" value="Genomic_DNA"/>
</dbReference>
<dbReference type="PIR" id="A82723">
    <property type="entry name" value="A82723"/>
</dbReference>
<dbReference type="RefSeq" id="WP_010893622.1">
    <property type="nucleotide sequence ID" value="NC_002488.3"/>
</dbReference>
<dbReference type="SMR" id="Q9PEC3"/>
<dbReference type="STRING" id="160492.XF_1105"/>
<dbReference type="KEGG" id="xfa:XF_1105"/>
<dbReference type="eggNOG" id="COG0289">
    <property type="taxonomic scope" value="Bacteria"/>
</dbReference>
<dbReference type="HOGENOM" id="CLU_047479_2_2_6"/>
<dbReference type="UniPathway" id="UPA00034">
    <property type="reaction ID" value="UER00018"/>
</dbReference>
<dbReference type="Proteomes" id="UP000000812">
    <property type="component" value="Chromosome"/>
</dbReference>
<dbReference type="GO" id="GO:0005829">
    <property type="term" value="C:cytosol"/>
    <property type="evidence" value="ECO:0007669"/>
    <property type="project" value="TreeGrafter"/>
</dbReference>
<dbReference type="GO" id="GO:0008839">
    <property type="term" value="F:4-hydroxy-tetrahydrodipicolinate reductase"/>
    <property type="evidence" value="ECO:0007669"/>
    <property type="project" value="UniProtKB-EC"/>
</dbReference>
<dbReference type="GO" id="GO:0051287">
    <property type="term" value="F:NAD binding"/>
    <property type="evidence" value="ECO:0007669"/>
    <property type="project" value="UniProtKB-UniRule"/>
</dbReference>
<dbReference type="GO" id="GO:0050661">
    <property type="term" value="F:NADP binding"/>
    <property type="evidence" value="ECO:0007669"/>
    <property type="project" value="UniProtKB-UniRule"/>
</dbReference>
<dbReference type="GO" id="GO:0016726">
    <property type="term" value="F:oxidoreductase activity, acting on CH or CH2 groups, NAD or NADP as acceptor"/>
    <property type="evidence" value="ECO:0007669"/>
    <property type="project" value="UniProtKB-UniRule"/>
</dbReference>
<dbReference type="GO" id="GO:0019877">
    <property type="term" value="P:diaminopimelate biosynthetic process"/>
    <property type="evidence" value="ECO:0007669"/>
    <property type="project" value="UniProtKB-UniRule"/>
</dbReference>
<dbReference type="GO" id="GO:0009089">
    <property type="term" value="P:lysine biosynthetic process via diaminopimelate"/>
    <property type="evidence" value="ECO:0007669"/>
    <property type="project" value="UniProtKB-UniRule"/>
</dbReference>
<dbReference type="CDD" id="cd02274">
    <property type="entry name" value="DHDPR_N"/>
    <property type="match status" value="1"/>
</dbReference>
<dbReference type="Gene3D" id="3.30.360.10">
    <property type="entry name" value="Dihydrodipicolinate Reductase, domain 2"/>
    <property type="match status" value="1"/>
</dbReference>
<dbReference type="Gene3D" id="3.40.50.720">
    <property type="entry name" value="NAD(P)-binding Rossmann-like Domain"/>
    <property type="match status" value="1"/>
</dbReference>
<dbReference type="HAMAP" id="MF_00102">
    <property type="entry name" value="DapB"/>
    <property type="match status" value="1"/>
</dbReference>
<dbReference type="InterPro" id="IPR022663">
    <property type="entry name" value="DapB_C"/>
</dbReference>
<dbReference type="InterPro" id="IPR000846">
    <property type="entry name" value="DapB_N"/>
</dbReference>
<dbReference type="InterPro" id="IPR022664">
    <property type="entry name" value="DapB_N_CS"/>
</dbReference>
<dbReference type="InterPro" id="IPR023940">
    <property type="entry name" value="DHDPR_bac"/>
</dbReference>
<dbReference type="InterPro" id="IPR036291">
    <property type="entry name" value="NAD(P)-bd_dom_sf"/>
</dbReference>
<dbReference type="NCBIfam" id="TIGR00036">
    <property type="entry name" value="dapB"/>
    <property type="match status" value="1"/>
</dbReference>
<dbReference type="PANTHER" id="PTHR20836:SF0">
    <property type="entry name" value="4-HYDROXY-TETRAHYDRODIPICOLINATE REDUCTASE 1, CHLOROPLASTIC-RELATED"/>
    <property type="match status" value="1"/>
</dbReference>
<dbReference type="PANTHER" id="PTHR20836">
    <property type="entry name" value="DIHYDRODIPICOLINATE REDUCTASE"/>
    <property type="match status" value="1"/>
</dbReference>
<dbReference type="Pfam" id="PF05173">
    <property type="entry name" value="DapB_C"/>
    <property type="match status" value="1"/>
</dbReference>
<dbReference type="Pfam" id="PF01113">
    <property type="entry name" value="DapB_N"/>
    <property type="match status" value="1"/>
</dbReference>
<dbReference type="PIRSF" id="PIRSF000161">
    <property type="entry name" value="DHPR"/>
    <property type="match status" value="1"/>
</dbReference>
<dbReference type="SUPFAM" id="SSF55347">
    <property type="entry name" value="Glyceraldehyde-3-phosphate dehydrogenase-like, C-terminal domain"/>
    <property type="match status" value="1"/>
</dbReference>
<dbReference type="SUPFAM" id="SSF51735">
    <property type="entry name" value="NAD(P)-binding Rossmann-fold domains"/>
    <property type="match status" value="1"/>
</dbReference>
<dbReference type="PROSITE" id="PS01298">
    <property type="entry name" value="DAPB"/>
    <property type="match status" value="1"/>
</dbReference>
<proteinExistence type="inferred from homology"/>